<keyword id="KW-0028">Amino-acid biosynthesis</keyword>
<keyword id="KW-0378">Hydrolase</keyword>
<keyword id="KW-0460">Magnesium</keyword>
<keyword id="KW-0479">Metal-binding</keyword>
<keyword id="KW-1185">Reference proteome</keyword>
<keyword id="KW-0718">Serine biosynthesis</keyword>
<name>SERB_ECOLI</name>
<accession>P0AGB0</accession>
<accession>P06862</accession>
<accession>Q2M5S9</accession>
<comment type="function">
    <text evidence="2">Catalyzes the dephosphorylation of phosphoserine (P-Ser). Also catalyzes the hydrolysis of phosphothreonine (P-Thr).</text>
</comment>
<comment type="catalytic activity">
    <reaction>
        <text>O-phospho-L-serine + H2O = L-serine + phosphate</text>
        <dbReference type="Rhea" id="RHEA:21208"/>
        <dbReference type="ChEBI" id="CHEBI:15377"/>
        <dbReference type="ChEBI" id="CHEBI:33384"/>
        <dbReference type="ChEBI" id="CHEBI:43474"/>
        <dbReference type="ChEBI" id="CHEBI:57524"/>
        <dbReference type="EC" id="3.1.3.3"/>
    </reaction>
</comment>
<comment type="catalytic activity">
    <reaction>
        <text>O-phospho-D-serine + H2O = D-serine + phosphate</text>
        <dbReference type="Rhea" id="RHEA:24873"/>
        <dbReference type="ChEBI" id="CHEBI:15377"/>
        <dbReference type="ChEBI" id="CHEBI:35247"/>
        <dbReference type="ChEBI" id="CHEBI:43474"/>
        <dbReference type="ChEBI" id="CHEBI:58680"/>
        <dbReference type="EC" id="3.1.3.3"/>
    </reaction>
</comment>
<comment type="cofactor">
    <cofactor evidence="2">
        <name>Mg(2+)</name>
        <dbReference type="ChEBI" id="CHEBI:18420"/>
    </cofactor>
    <cofactor evidence="2">
        <name>Mn(2+)</name>
        <dbReference type="ChEBI" id="CHEBI:29035"/>
    </cofactor>
    <cofactor evidence="2">
        <name>Co(2+)</name>
        <dbReference type="ChEBI" id="CHEBI:48828"/>
    </cofactor>
    <cofactor evidence="2">
        <name>Zn(2+)</name>
        <dbReference type="ChEBI" id="CHEBI:29105"/>
    </cofactor>
    <text evidence="2">Binds 1 Mg(2+) ion per subunit. Can also use other divalent metal cations as Mn(2+), Co(2+) and Zn(2+).</text>
</comment>
<comment type="biophysicochemical properties">
    <kinetics>
        <KM evidence="2">0.097 mM for P-Ser (with magnesium ions as cofactor and at pH 9)</KM>
        <KM evidence="2">0.07 mM for imido-diphosphate (with magnesium ions as cofactor and at pH 9)</KM>
        <KM evidence="2">6.2 mM for acetyl-phosphate (with magnesium ions as cofactor and at pH 9)</KM>
    </kinetics>
    <phDependence>
        <text evidence="2">Optimum pH is between 6 and 7.5.</text>
    </phDependence>
</comment>
<comment type="pathway">
    <text>Amino-acid biosynthesis; L-serine biosynthesis; L-serine from 3-phospho-D-glycerate: step 3/3.</text>
</comment>
<comment type="similarity">
    <text evidence="3">Belongs to the HAD-like hydrolase superfamily. SerB family.</text>
</comment>
<reference key="1">
    <citation type="journal article" date="1985" name="Nucleic Acids Res.">
        <title>DNA sequence and characterization of the Escherichia coli serB gene.</title>
        <authorList>
            <person name="Neuwald A.F."/>
            <person name="Stauffer G.V."/>
        </authorList>
    </citation>
    <scope>NUCLEOTIDE SEQUENCE [GENOMIC DNA]</scope>
    <source>
        <strain>K12</strain>
    </source>
</reference>
<reference key="2">
    <citation type="journal article" date="1995" name="Nucleic Acids Res.">
        <title>Analysis of the Escherichia coli genome VI: DNA sequence of the region from 92.8 through 100 minutes.</title>
        <authorList>
            <person name="Burland V.D."/>
            <person name="Plunkett G. III"/>
            <person name="Sofia H.J."/>
            <person name="Daniels D.L."/>
            <person name="Blattner F.R."/>
        </authorList>
    </citation>
    <scope>NUCLEOTIDE SEQUENCE [LARGE SCALE GENOMIC DNA]</scope>
    <source>
        <strain>K12 / MG1655 / ATCC 47076</strain>
    </source>
</reference>
<reference key="3">
    <citation type="journal article" date="1997" name="Science">
        <title>The complete genome sequence of Escherichia coli K-12.</title>
        <authorList>
            <person name="Blattner F.R."/>
            <person name="Plunkett G. III"/>
            <person name="Bloch C.A."/>
            <person name="Perna N.T."/>
            <person name="Burland V."/>
            <person name="Riley M."/>
            <person name="Collado-Vides J."/>
            <person name="Glasner J.D."/>
            <person name="Rode C.K."/>
            <person name="Mayhew G.F."/>
            <person name="Gregor J."/>
            <person name="Davis N.W."/>
            <person name="Kirkpatrick H.A."/>
            <person name="Goeden M.A."/>
            <person name="Rose D.J."/>
            <person name="Mau B."/>
            <person name="Shao Y."/>
        </authorList>
    </citation>
    <scope>NUCLEOTIDE SEQUENCE [LARGE SCALE GENOMIC DNA]</scope>
    <source>
        <strain>K12 / MG1655 / ATCC 47076</strain>
    </source>
</reference>
<reference key="4">
    <citation type="journal article" date="2006" name="Mol. Syst. Biol.">
        <title>Highly accurate genome sequences of Escherichia coli K-12 strains MG1655 and W3110.</title>
        <authorList>
            <person name="Hayashi K."/>
            <person name="Morooka N."/>
            <person name="Yamamoto Y."/>
            <person name="Fujita K."/>
            <person name="Isono K."/>
            <person name="Choi S."/>
            <person name="Ohtsubo E."/>
            <person name="Baba T."/>
            <person name="Wanner B.L."/>
            <person name="Mori H."/>
            <person name="Horiuchi T."/>
        </authorList>
    </citation>
    <scope>NUCLEOTIDE SEQUENCE [LARGE SCALE GENOMIC DNA]</scope>
    <source>
        <strain>K12 / W3110 / ATCC 27325 / DSM 5911</strain>
    </source>
</reference>
<reference key="5">
    <citation type="journal article" date="2006" name="J. Biol. Chem.">
        <title>Genome-wide analysis of substrate specificities of the Escherichia coli haloacid dehalogenase-like phosphatase family.</title>
        <authorList>
            <person name="Kuznetsova E."/>
            <person name="Proudfoot M."/>
            <person name="Gonzalez C.F."/>
            <person name="Brown G."/>
            <person name="Omelchenko M.V."/>
            <person name="Borozan I."/>
            <person name="Carmel L."/>
            <person name="Wolf Y.I."/>
            <person name="Mori H."/>
            <person name="Savchenko A.V."/>
            <person name="Arrowsmith C.H."/>
            <person name="Koonin E.V."/>
            <person name="Edwards A.M."/>
            <person name="Yakunin A.F."/>
        </authorList>
    </citation>
    <scope>FUNCTION AS A PHOSPHATASE</scope>
    <scope>BIOPHYSICOCHEMICAL PROPERTIES</scope>
    <scope>SUBSTRATE SPECIFICITY</scope>
    <scope>COFACTOR</scope>
</reference>
<organism>
    <name type="scientific">Escherichia coli (strain K12)</name>
    <dbReference type="NCBI Taxonomy" id="83333"/>
    <lineage>
        <taxon>Bacteria</taxon>
        <taxon>Pseudomonadati</taxon>
        <taxon>Pseudomonadota</taxon>
        <taxon>Gammaproteobacteria</taxon>
        <taxon>Enterobacterales</taxon>
        <taxon>Enterobacteriaceae</taxon>
        <taxon>Escherichia</taxon>
    </lineage>
</organism>
<evidence type="ECO:0000250" key="1"/>
<evidence type="ECO:0000269" key="2">
    <source>
    </source>
</evidence>
<evidence type="ECO:0000305" key="3"/>
<protein>
    <recommendedName>
        <fullName>Phosphoserine phosphatase</fullName>
        <shortName>PSP</shortName>
        <shortName>PSPase</shortName>
        <ecNumber>3.1.3.3</ecNumber>
    </recommendedName>
    <alternativeName>
        <fullName>O-phosphoserine phosphohydrolase</fullName>
    </alternativeName>
</protein>
<proteinExistence type="evidence at protein level"/>
<sequence>MPNITWCDLPEDVSLWPGLPLSLSGDEVMPLDYHAGRSGWLLYGRGLDKQRLTQYQSKLGAAMVIVAAWCVEDYQVIRLAGSLTARATRLAHEAQLDVAPLGKIPHLRTPGLLVMDMDSTAIQIECIDEIAKLAGTGEMVAEVTERAMRGELDFTASLRSRVATLKGADANILQQVRENLPLMPGLTQLVLKLETLGWKVAIASGGFTFFAEYLRDKLRLTAVVANELEIMDGKFTGNVIGDIVDAQYKAKTLTRLAQEYEIPLAQTVAIGDGANDLPMIKAAGLGIAYHAKPKVNEKAEVTIRHADLMGVFCILSGSLNQK</sequence>
<gene>
    <name type="primary">serB</name>
    <name type="ordered locus">b4388</name>
    <name type="ordered locus">JW4351</name>
</gene>
<dbReference type="EC" id="3.1.3.3"/>
<dbReference type="EMBL" id="X03046">
    <property type="protein sequence ID" value="CAA26852.1"/>
    <property type="molecule type" value="Genomic_DNA"/>
</dbReference>
<dbReference type="EMBL" id="U14003">
    <property type="protein sequence ID" value="AAA97284.1"/>
    <property type="molecule type" value="Genomic_DNA"/>
</dbReference>
<dbReference type="EMBL" id="U00096">
    <property type="protein sequence ID" value="AAC77341.1"/>
    <property type="molecule type" value="Genomic_DNA"/>
</dbReference>
<dbReference type="EMBL" id="AP009048">
    <property type="protein sequence ID" value="BAE78377.1"/>
    <property type="molecule type" value="Genomic_DNA"/>
</dbReference>
<dbReference type="PIR" id="A24271">
    <property type="entry name" value="PAECS"/>
</dbReference>
<dbReference type="RefSeq" id="NP_418805.1">
    <property type="nucleotide sequence ID" value="NC_000913.3"/>
</dbReference>
<dbReference type="RefSeq" id="WP_001132955.1">
    <property type="nucleotide sequence ID" value="NZ_SSUV01000012.1"/>
</dbReference>
<dbReference type="SMR" id="P0AGB0"/>
<dbReference type="BioGRID" id="4262789">
    <property type="interactions" value="123"/>
</dbReference>
<dbReference type="DIP" id="DIP-48100N"/>
<dbReference type="FunCoup" id="P0AGB0">
    <property type="interactions" value="700"/>
</dbReference>
<dbReference type="IntAct" id="P0AGB0">
    <property type="interactions" value="3"/>
</dbReference>
<dbReference type="STRING" id="511145.b4388"/>
<dbReference type="jPOST" id="P0AGB0"/>
<dbReference type="PaxDb" id="511145-b4388"/>
<dbReference type="EnsemblBacteria" id="AAC77341">
    <property type="protein sequence ID" value="AAC77341"/>
    <property type="gene ID" value="b4388"/>
</dbReference>
<dbReference type="GeneID" id="93777457"/>
<dbReference type="GeneID" id="948913"/>
<dbReference type="KEGG" id="ecj:JW4351"/>
<dbReference type="KEGG" id="eco:b4388"/>
<dbReference type="KEGG" id="ecoc:C3026_23710"/>
<dbReference type="PATRIC" id="fig|1411691.4.peg.2297"/>
<dbReference type="EchoBASE" id="EB0938"/>
<dbReference type="eggNOG" id="COG0560">
    <property type="taxonomic scope" value="Bacteria"/>
</dbReference>
<dbReference type="HOGENOM" id="CLU_036368_4_0_6"/>
<dbReference type="InParanoid" id="P0AGB0"/>
<dbReference type="OMA" id="LSMFKHA"/>
<dbReference type="OrthoDB" id="9792539at2"/>
<dbReference type="PhylomeDB" id="P0AGB0"/>
<dbReference type="BioCyc" id="EcoCyc:PSERPHOSPHA-MONOMER"/>
<dbReference type="BioCyc" id="MetaCyc:PSERPHOSPHA-MONOMER"/>
<dbReference type="SABIO-RK" id="P0AGB0"/>
<dbReference type="UniPathway" id="UPA00135">
    <property type="reaction ID" value="UER00198"/>
</dbReference>
<dbReference type="PRO" id="PR:P0AGB0"/>
<dbReference type="Proteomes" id="UP000000625">
    <property type="component" value="Chromosome"/>
</dbReference>
<dbReference type="GO" id="GO:0005737">
    <property type="term" value="C:cytoplasm"/>
    <property type="evidence" value="ECO:0000314"/>
    <property type="project" value="EcoliWiki"/>
</dbReference>
<dbReference type="GO" id="GO:0036424">
    <property type="term" value="F:L-phosphoserine phosphatase activity"/>
    <property type="evidence" value="ECO:0000314"/>
    <property type="project" value="EcoCyc"/>
</dbReference>
<dbReference type="GO" id="GO:0000287">
    <property type="term" value="F:magnesium ion binding"/>
    <property type="evidence" value="ECO:0000314"/>
    <property type="project" value="EcoliWiki"/>
</dbReference>
<dbReference type="GO" id="GO:0016791">
    <property type="term" value="F:phosphatase activity"/>
    <property type="evidence" value="ECO:0000314"/>
    <property type="project" value="EcoliWiki"/>
</dbReference>
<dbReference type="GO" id="GO:0008652">
    <property type="term" value="P:amino acid biosynthetic process"/>
    <property type="evidence" value="ECO:0000314"/>
    <property type="project" value="EcoliWiki"/>
</dbReference>
<dbReference type="GO" id="GO:0006564">
    <property type="term" value="P:L-serine biosynthetic process"/>
    <property type="evidence" value="ECO:0000314"/>
    <property type="project" value="EcoliWiki"/>
</dbReference>
<dbReference type="CDD" id="cd07500">
    <property type="entry name" value="HAD_PSP"/>
    <property type="match status" value="1"/>
</dbReference>
<dbReference type="FunFam" id="1.10.150.210:FF:000001">
    <property type="entry name" value="Phosphoserine phosphatase"/>
    <property type="match status" value="1"/>
</dbReference>
<dbReference type="FunFam" id="3.40.50.1000:FF:000048">
    <property type="entry name" value="Phosphoserine phosphatase"/>
    <property type="match status" value="1"/>
</dbReference>
<dbReference type="Gene3D" id="3.30.70.2020">
    <property type="match status" value="1"/>
</dbReference>
<dbReference type="Gene3D" id="3.40.50.1000">
    <property type="entry name" value="HAD superfamily/HAD-like"/>
    <property type="match status" value="1"/>
</dbReference>
<dbReference type="Gene3D" id="1.10.150.210">
    <property type="entry name" value="Phosphoserine phosphatase, domain 2"/>
    <property type="match status" value="1"/>
</dbReference>
<dbReference type="InterPro" id="IPR050582">
    <property type="entry name" value="HAD-like_SerB"/>
</dbReference>
<dbReference type="InterPro" id="IPR036412">
    <property type="entry name" value="HAD-like_sf"/>
</dbReference>
<dbReference type="InterPro" id="IPR023214">
    <property type="entry name" value="HAD_sf"/>
</dbReference>
<dbReference type="InterPro" id="IPR004469">
    <property type="entry name" value="PSP"/>
</dbReference>
<dbReference type="InterPro" id="IPR041449">
    <property type="entry name" value="SerB_N"/>
</dbReference>
<dbReference type="NCBIfam" id="TIGR01488">
    <property type="entry name" value="HAD-SF-IB"/>
    <property type="match status" value="1"/>
</dbReference>
<dbReference type="NCBIfam" id="NF008350">
    <property type="entry name" value="PRK11133.1"/>
    <property type="match status" value="1"/>
</dbReference>
<dbReference type="NCBIfam" id="TIGR00338">
    <property type="entry name" value="serB"/>
    <property type="match status" value="1"/>
</dbReference>
<dbReference type="PANTHER" id="PTHR43344">
    <property type="entry name" value="PHOSPHOSERINE PHOSPHATASE"/>
    <property type="match status" value="1"/>
</dbReference>
<dbReference type="PANTHER" id="PTHR43344:SF2">
    <property type="entry name" value="PHOSPHOSERINE PHOSPHATASE"/>
    <property type="match status" value="1"/>
</dbReference>
<dbReference type="Pfam" id="PF18429">
    <property type="entry name" value="DUF5609"/>
    <property type="match status" value="1"/>
</dbReference>
<dbReference type="Pfam" id="PF12710">
    <property type="entry name" value="HAD"/>
    <property type="match status" value="1"/>
</dbReference>
<dbReference type="SFLD" id="SFLDG01136">
    <property type="entry name" value="C1.6:_Phosphoserine_Phosphatas"/>
    <property type="match status" value="1"/>
</dbReference>
<dbReference type="SFLD" id="SFLDF00029">
    <property type="entry name" value="phosphoserine_phosphatase"/>
    <property type="match status" value="1"/>
</dbReference>
<dbReference type="SUPFAM" id="SSF56784">
    <property type="entry name" value="HAD-like"/>
    <property type="match status" value="1"/>
</dbReference>
<feature type="chain" id="PRO_0000156886" description="Phosphoserine phosphatase">
    <location>
        <begin position="1"/>
        <end position="322"/>
    </location>
</feature>
<feature type="active site" description="Nucleophile" evidence="1">
    <location>
        <position position="116"/>
    </location>
</feature>
<feature type="active site" description="Proton donor" evidence="1">
    <location>
        <position position="118"/>
    </location>
</feature>
<feature type="binding site" evidence="1">
    <location>
        <begin position="10"/>
        <end position="12"/>
    </location>
    <ligand>
        <name>substrate</name>
    </ligand>
</feature>
<feature type="binding site" evidence="1">
    <location>
        <position position="12"/>
    </location>
    <ligand>
        <name>Mg(2+)</name>
        <dbReference type="ChEBI" id="CHEBI:18420"/>
    </ligand>
</feature>
<feature type="binding site" evidence="1">
    <location>
        <position position="116"/>
    </location>
    <ligand>
        <name>Mg(2+)</name>
        <dbReference type="ChEBI" id="CHEBI:18420"/>
    </ligand>
</feature>
<feature type="binding site" evidence="1">
    <location>
        <position position="118"/>
    </location>
    <ligand>
        <name>Mg(2+)</name>
        <dbReference type="ChEBI" id="CHEBI:18420"/>
    </ligand>
</feature>
<feature type="binding site" evidence="1">
    <location>
        <position position="125"/>
    </location>
    <ligand>
        <name>substrate</name>
    </ligand>
</feature>
<feature type="binding site" evidence="1">
    <location>
        <position position="161"/>
    </location>
    <ligand>
        <name>substrate</name>
    </ligand>
</feature>
<feature type="binding site" evidence="1">
    <location>
        <begin position="204"/>
        <end position="205"/>
    </location>
    <ligand>
        <name>substrate</name>
    </ligand>
</feature>
<feature type="binding site" evidence="1">
    <location>
        <position position="249"/>
    </location>
    <ligand>
        <name>substrate</name>
    </ligand>
</feature>
<feature type="binding site" evidence="1">
    <location>
        <position position="272"/>
    </location>
    <ligand>
        <name>Mg(2+)</name>
        <dbReference type="ChEBI" id="CHEBI:18420"/>
    </ligand>
</feature>
<feature type="binding site" evidence="1">
    <location>
        <position position="275"/>
    </location>
    <ligand>
        <name>substrate</name>
    </ligand>
</feature>